<sequence>MAKQDFYEILGVPKTAEEREIKKAYKRLAMKFHPDRNQGDKEAEAKFKEIKEAYEILTDAQKRAAYDQYGHAAFEQGGMGGGGYGGGGFGGGGADFGDIFGDVFGDIFGGGRGRQRASRGADLRYNMELTLEEAVRGVTKEIRIPTLEECDICHGSGAKVGTKPQTCPTCHGSGQVQIRQGFFAVQQACPHCHGRGTLIKDPCNKCHGHGRVEKTKTLSVKIPAGVDTGDRIRLAGEGEAGEHGAQAGDLYVQVQVKQHAIFEREGNNLYCEVPINFAMAALGGEIEVPTLDGRVNLKVPGETQTGKLFRMRGRGVKSVRGGAQGDLLCRVVVETPVGLNDKQKQLLKELQESFGGPTGENNSPRSKSFFDGVKKFFDDLTR</sequence>
<protein>
    <recommendedName>
        <fullName evidence="1">Chaperone protein DnaJ</fullName>
    </recommendedName>
</protein>
<reference key="1">
    <citation type="journal article" date="2010" name="PLoS Genet.">
        <title>Genome sequence of the plant growth promoting endophytic bacterium Enterobacter sp. 638.</title>
        <authorList>
            <person name="Taghavi S."/>
            <person name="van der Lelie D."/>
            <person name="Hoffman A."/>
            <person name="Zhang Y.B."/>
            <person name="Walla M.D."/>
            <person name="Vangronsveld J."/>
            <person name="Newman L."/>
            <person name="Monchy S."/>
        </authorList>
    </citation>
    <scope>NUCLEOTIDE SEQUENCE [LARGE SCALE GENOMIC DNA]</scope>
    <source>
        <strain>638</strain>
    </source>
</reference>
<keyword id="KW-0143">Chaperone</keyword>
<keyword id="KW-0963">Cytoplasm</keyword>
<keyword id="KW-0235">DNA replication</keyword>
<keyword id="KW-0479">Metal-binding</keyword>
<keyword id="KW-0677">Repeat</keyword>
<keyword id="KW-0346">Stress response</keyword>
<keyword id="KW-0862">Zinc</keyword>
<keyword id="KW-0863">Zinc-finger</keyword>
<dbReference type="EMBL" id="CP000653">
    <property type="protein sequence ID" value="ABP59266.1"/>
    <property type="molecule type" value="Genomic_DNA"/>
</dbReference>
<dbReference type="RefSeq" id="WP_012015988.1">
    <property type="nucleotide sequence ID" value="NC_009436.1"/>
</dbReference>
<dbReference type="SMR" id="A4W6D6"/>
<dbReference type="STRING" id="399742.Ent638_0579"/>
<dbReference type="KEGG" id="ent:Ent638_0579"/>
<dbReference type="eggNOG" id="COG0484">
    <property type="taxonomic scope" value="Bacteria"/>
</dbReference>
<dbReference type="HOGENOM" id="CLU_017633_0_7_6"/>
<dbReference type="OrthoDB" id="9779889at2"/>
<dbReference type="Proteomes" id="UP000000230">
    <property type="component" value="Chromosome"/>
</dbReference>
<dbReference type="GO" id="GO:0005737">
    <property type="term" value="C:cytoplasm"/>
    <property type="evidence" value="ECO:0007669"/>
    <property type="project" value="UniProtKB-SubCell"/>
</dbReference>
<dbReference type="GO" id="GO:0005524">
    <property type="term" value="F:ATP binding"/>
    <property type="evidence" value="ECO:0007669"/>
    <property type="project" value="InterPro"/>
</dbReference>
<dbReference type="GO" id="GO:0031072">
    <property type="term" value="F:heat shock protein binding"/>
    <property type="evidence" value="ECO:0007669"/>
    <property type="project" value="InterPro"/>
</dbReference>
<dbReference type="GO" id="GO:0051082">
    <property type="term" value="F:unfolded protein binding"/>
    <property type="evidence" value="ECO:0007669"/>
    <property type="project" value="UniProtKB-UniRule"/>
</dbReference>
<dbReference type="GO" id="GO:0008270">
    <property type="term" value="F:zinc ion binding"/>
    <property type="evidence" value="ECO:0007669"/>
    <property type="project" value="UniProtKB-UniRule"/>
</dbReference>
<dbReference type="GO" id="GO:0051085">
    <property type="term" value="P:chaperone cofactor-dependent protein refolding"/>
    <property type="evidence" value="ECO:0007669"/>
    <property type="project" value="TreeGrafter"/>
</dbReference>
<dbReference type="GO" id="GO:0006260">
    <property type="term" value="P:DNA replication"/>
    <property type="evidence" value="ECO:0007669"/>
    <property type="project" value="UniProtKB-KW"/>
</dbReference>
<dbReference type="GO" id="GO:0042026">
    <property type="term" value="P:protein refolding"/>
    <property type="evidence" value="ECO:0007669"/>
    <property type="project" value="TreeGrafter"/>
</dbReference>
<dbReference type="GO" id="GO:0009408">
    <property type="term" value="P:response to heat"/>
    <property type="evidence" value="ECO:0007669"/>
    <property type="project" value="InterPro"/>
</dbReference>
<dbReference type="CDD" id="cd06257">
    <property type="entry name" value="DnaJ"/>
    <property type="match status" value="1"/>
</dbReference>
<dbReference type="CDD" id="cd10747">
    <property type="entry name" value="DnaJ_C"/>
    <property type="match status" value="1"/>
</dbReference>
<dbReference type="CDD" id="cd10719">
    <property type="entry name" value="DnaJ_zf"/>
    <property type="match status" value="1"/>
</dbReference>
<dbReference type="FunFam" id="1.10.287.110:FF:000003">
    <property type="entry name" value="Molecular chaperone DnaJ"/>
    <property type="match status" value="1"/>
</dbReference>
<dbReference type="FunFam" id="2.10.230.10:FF:000002">
    <property type="entry name" value="Molecular chaperone DnaJ"/>
    <property type="match status" value="1"/>
</dbReference>
<dbReference type="FunFam" id="2.60.260.20:FF:000004">
    <property type="entry name" value="Molecular chaperone DnaJ"/>
    <property type="match status" value="1"/>
</dbReference>
<dbReference type="Gene3D" id="1.10.287.110">
    <property type="entry name" value="DnaJ domain"/>
    <property type="match status" value="1"/>
</dbReference>
<dbReference type="Gene3D" id="2.10.230.10">
    <property type="entry name" value="Heat shock protein DnaJ, cysteine-rich domain"/>
    <property type="match status" value="1"/>
</dbReference>
<dbReference type="Gene3D" id="2.60.260.20">
    <property type="entry name" value="Urease metallochaperone UreE, N-terminal domain"/>
    <property type="match status" value="2"/>
</dbReference>
<dbReference type="HAMAP" id="MF_01152">
    <property type="entry name" value="DnaJ"/>
    <property type="match status" value="1"/>
</dbReference>
<dbReference type="InterPro" id="IPR012724">
    <property type="entry name" value="DnaJ"/>
</dbReference>
<dbReference type="InterPro" id="IPR002939">
    <property type="entry name" value="DnaJ_C"/>
</dbReference>
<dbReference type="InterPro" id="IPR001623">
    <property type="entry name" value="DnaJ_domain"/>
</dbReference>
<dbReference type="InterPro" id="IPR018253">
    <property type="entry name" value="DnaJ_domain_CS"/>
</dbReference>
<dbReference type="InterPro" id="IPR008971">
    <property type="entry name" value="HSP40/DnaJ_pept-bd"/>
</dbReference>
<dbReference type="InterPro" id="IPR001305">
    <property type="entry name" value="HSP_DnaJ_Cys-rich_dom"/>
</dbReference>
<dbReference type="InterPro" id="IPR036410">
    <property type="entry name" value="HSP_DnaJ_Cys-rich_dom_sf"/>
</dbReference>
<dbReference type="InterPro" id="IPR036869">
    <property type="entry name" value="J_dom_sf"/>
</dbReference>
<dbReference type="NCBIfam" id="TIGR02349">
    <property type="entry name" value="DnaJ_bact"/>
    <property type="match status" value="1"/>
</dbReference>
<dbReference type="NCBIfam" id="NF008035">
    <property type="entry name" value="PRK10767.1"/>
    <property type="match status" value="1"/>
</dbReference>
<dbReference type="PANTHER" id="PTHR43096:SF48">
    <property type="entry name" value="CHAPERONE PROTEIN DNAJ"/>
    <property type="match status" value="1"/>
</dbReference>
<dbReference type="PANTHER" id="PTHR43096">
    <property type="entry name" value="DNAJ HOMOLOG 1, MITOCHONDRIAL-RELATED"/>
    <property type="match status" value="1"/>
</dbReference>
<dbReference type="Pfam" id="PF00226">
    <property type="entry name" value="DnaJ"/>
    <property type="match status" value="1"/>
</dbReference>
<dbReference type="Pfam" id="PF01556">
    <property type="entry name" value="DnaJ_C"/>
    <property type="match status" value="1"/>
</dbReference>
<dbReference type="Pfam" id="PF00684">
    <property type="entry name" value="DnaJ_CXXCXGXG"/>
    <property type="match status" value="1"/>
</dbReference>
<dbReference type="PRINTS" id="PR00625">
    <property type="entry name" value="JDOMAIN"/>
</dbReference>
<dbReference type="SMART" id="SM00271">
    <property type="entry name" value="DnaJ"/>
    <property type="match status" value="1"/>
</dbReference>
<dbReference type="SUPFAM" id="SSF46565">
    <property type="entry name" value="Chaperone J-domain"/>
    <property type="match status" value="1"/>
</dbReference>
<dbReference type="SUPFAM" id="SSF57938">
    <property type="entry name" value="DnaJ/Hsp40 cysteine-rich domain"/>
    <property type="match status" value="1"/>
</dbReference>
<dbReference type="SUPFAM" id="SSF49493">
    <property type="entry name" value="HSP40/DnaJ peptide-binding domain"/>
    <property type="match status" value="2"/>
</dbReference>
<dbReference type="PROSITE" id="PS00636">
    <property type="entry name" value="DNAJ_1"/>
    <property type="match status" value="1"/>
</dbReference>
<dbReference type="PROSITE" id="PS50076">
    <property type="entry name" value="DNAJ_2"/>
    <property type="match status" value="1"/>
</dbReference>
<dbReference type="PROSITE" id="PS51188">
    <property type="entry name" value="ZF_CR"/>
    <property type="match status" value="1"/>
</dbReference>
<feature type="chain" id="PRO_1000085193" description="Chaperone protein DnaJ">
    <location>
        <begin position="1"/>
        <end position="382"/>
    </location>
</feature>
<feature type="domain" description="J" evidence="1">
    <location>
        <begin position="5"/>
        <end position="70"/>
    </location>
</feature>
<feature type="repeat" description="CXXCXGXG motif">
    <location>
        <begin position="150"/>
        <end position="157"/>
    </location>
</feature>
<feature type="repeat" description="CXXCXGXG motif">
    <location>
        <begin position="167"/>
        <end position="174"/>
    </location>
</feature>
<feature type="repeat" description="CXXCXGXG motif">
    <location>
        <begin position="189"/>
        <end position="196"/>
    </location>
</feature>
<feature type="repeat" description="CXXCXGXG motif">
    <location>
        <begin position="203"/>
        <end position="210"/>
    </location>
</feature>
<feature type="zinc finger region" description="CR-type" evidence="1">
    <location>
        <begin position="137"/>
        <end position="215"/>
    </location>
</feature>
<feature type="binding site" evidence="1">
    <location>
        <position position="150"/>
    </location>
    <ligand>
        <name>Zn(2+)</name>
        <dbReference type="ChEBI" id="CHEBI:29105"/>
        <label>1</label>
    </ligand>
</feature>
<feature type="binding site" evidence="1">
    <location>
        <position position="153"/>
    </location>
    <ligand>
        <name>Zn(2+)</name>
        <dbReference type="ChEBI" id="CHEBI:29105"/>
        <label>1</label>
    </ligand>
</feature>
<feature type="binding site" evidence="1">
    <location>
        <position position="167"/>
    </location>
    <ligand>
        <name>Zn(2+)</name>
        <dbReference type="ChEBI" id="CHEBI:29105"/>
        <label>2</label>
    </ligand>
</feature>
<feature type="binding site" evidence="1">
    <location>
        <position position="170"/>
    </location>
    <ligand>
        <name>Zn(2+)</name>
        <dbReference type="ChEBI" id="CHEBI:29105"/>
        <label>2</label>
    </ligand>
</feature>
<feature type="binding site" evidence="1">
    <location>
        <position position="189"/>
    </location>
    <ligand>
        <name>Zn(2+)</name>
        <dbReference type="ChEBI" id="CHEBI:29105"/>
        <label>2</label>
    </ligand>
</feature>
<feature type="binding site" evidence="1">
    <location>
        <position position="192"/>
    </location>
    <ligand>
        <name>Zn(2+)</name>
        <dbReference type="ChEBI" id="CHEBI:29105"/>
        <label>2</label>
    </ligand>
</feature>
<feature type="binding site" evidence="1">
    <location>
        <position position="203"/>
    </location>
    <ligand>
        <name>Zn(2+)</name>
        <dbReference type="ChEBI" id="CHEBI:29105"/>
        <label>1</label>
    </ligand>
</feature>
<feature type="binding site" evidence="1">
    <location>
        <position position="206"/>
    </location>
    <ligand>
        <name>Zn(2+)</name>
        <dbReference type="ChEBI" id="CHEBI:29105"/>
        <label>1</label>
    </ligand>
</feature>
<accession>A4W6D6</accession>
<comment type="function">
    <text evidence="1">Participates actively in the response to hyperosmotic and heat shock by preventing the aggregation of stress-denatured proteins and by disaggregating proteins, also in an autonomous, DnaK-independent fashion. Unfolded proteins bind initially to DnaJ; upon interaction with the DnaJ-bound protein, DnaK hydrolyzes its bound ATP, resulting in the formation of a stable complex. GrpE releases ADP from DnaK; ATP binding to DnaK triggers the release of the substrate protein, thus completing the reaction cycle. Several rounds of ATP-dependent interactions between DnaJ, DnaK and GrpE are required for fully efficient folding. Also involved, together with DnaK and GrpE, in the DNA replication of plasmids through activation of initiation proteins.</text>
</comment>
<comment type="cofactor">
    <cofactor evidence="1">
        <name>Zn(2+)</name>
        <dbReference type="ChEBI" id="CHEBI:29105"/>
    </cofactor>
    <text evidence="1">Binds 2 Zn(2+) ions per monomer.</text>
</comment>
<comment type="subunit">
    <text evidence="1">Homodimer.</text>
</comment>
<comment type="subcellular location">
    <subcellularLocation>
        <location evidence="1">Cytoplasm</location>
    </subcellularLocation>
</comment>
<comment type="domain">
    <text evidence="1">The J domain is necessary and sufficient to stimulate DnaK ATPase activity. Zinc center 1 plays an important role in the autonomous, DnaK-independent chaperone activity of DnaJ. Zinc center 2 is essential for interaction with DnaK and for DnaJ activity.</text>
</comment>
<comment type="similarity">
    <text evidence="1">Belongs to the DnaJ family.</text>
</comment>
<organism>
    <name type="scientific">Enterobacter sp. (strain 638)</name>
    <dbReference type="NCBI Taxonomy" id="399742"/>
    <lineage>
        <taxon>Bacteria</taxon>
        <taxon>Pseudomonadati</taxon>
        <taxon>Pseudomonadota</taxon>
        <taxon>Gammaproteobacteria</taxon>
        <taxon>Enterobacterales</taxon>
        <taxon>Enterobacteriaceae</taxon>
        <taxon>Enterobacter</taxon>
    </lineage>
</organism>
<gene>
    <name evidence="1" type="primary">dnaJ</name>
    <name type="ordered locus">Ent638_0579</name>
</gene>
<evidence type="ECO:0000255" key="1">
    <source>
        <dbReference type="HAMAP-Rule" id="MF_01152"/>
    </source>
</evidence>
<name>DNAJ_ENT38</name>
<proteinExistence type="inferred from homology"/>